<proteinExistence type="inferred from homology"/>
<reference key="1">
    <citation type="journal article" date="2005" name="Nat. Biotechnol.">
        <title>The complete genome sequence of the meat-borne lactic acid bacterium Lactobacillus sakei 23K.</title>
        <authorList>
            <person name="Chaillou S."/>
            <person name="Champomier-Verges M.-C."/>
            <person name="Cornet M."/>
            <person name="Crutz-Le Coq A.-M."/>
            <person name="Dudez A.-M."/>
            <person name="Martin V."/>
            <person name="Beaufils S."/>
            <person name="Darbon-Rongere E."/>
            <person name="Bossy R."/>
            <person name="Loux V."/>
            <person name="Zagorec M."/>
        </authorList>
    </citation>
    <scope>NUCLEOTIDE SEQUENCE [LARGE SCALE GENOMIC DNA]</scope>
    <source>
        <strain>23K</strain>
    </source>
</reference>
<keyword id="KW-0030">Aminoacyl-tRNA synthetase</keyword>
<keyword id="KW-0067">ATP-binding</keyword>
<keyword id="KW-0963">Cytoplasm</keyword>
<keyword id="KW-0436">Ligase</keyword>
<keyword id="KW-0547">Nucleotide-binding</keyword>
<keyword id="KW-0648">Protein biosynthesis</keyword>
<keyword id="KW-1185">Reference proteome</keyword>
<keyword id="KW-0694">RNA-binding</keyword>
<feature type="chain" id="PRO_0000234719" description="Tyrosine--tRNA ligase">
    <location>
        <begin position="1"/>
        <end position="419"/>
    </location>
</feature>
<feature type="domain" description="S4 RNA-binding" evidence="1">
    <location>
        <begin position="352"/>
        <end position="419"/>
    </location>
</feature>
<feature type="short sequence motif" description="'HIGH' region">
    <location>
        <begin position="41"/>
        <end position="50"/>
    </location>
</feature>
<feature type="short sequence motif" description="'KMSKS' region">
    <location>
        <begin position="230"/>
        <end position="234"/>
    </location>
</feature>
<feature type="binding site" evidence="1">
    <location>
        <position position="36"/>
    </location>
    <ligand>
        <name>L-tyrosine</name>
        <dbReference type="ChEBI" id="CHEBI:58315"/>
    </ligand>
</feature>
<feature type="binding site" evidence="1">
    <location>
        <position position="168"/>
    </location>
    <ligand>
        <name>L-tyrosine</name>
        <dbReference type="ChEBI" id="CHEBI:58315"/>
    </ligand>
</feature>
<feature type="binding site" evidence="1">
    <location>
        <position position="172"/>
    </location>
    <ligand>
        <name>L-tyrosine</name>
        <dbReference type="ChEBI" id="CHEBI:58315"/>
    </ligand>
</feature>
<feature type="binding site" evidence="1">
    <location>
        <position position="233"/>
    </location>
    <ligand>
        <name>ATP</name>
        <dbReference type="ChEBI" id="CHEBI:30616"/>
    </ligand>
</feature>
<protein>
    <recommendedName>
        <fullName evidence="1">Tyrosine--tRNA ligase</fullName>
        <ecNumber evidence="1">6.1.1.1</ecNumber>
    </recommendedName>
    <alternativeName>
        <fullName evidence="1">Tyrosyl-tRNA synthetase</fullName>
        <shortName evidence="1">TyrRS</shortName>
    </alternativeName>
</protein>
<evidence type="ECO:0000255" key="1">
    <source>
        <dbReference type="HAMAP-Rule" id="MF_02006"/>
    </source>
</evidence>
<organism>
    <name type="scientific">Latilactobacillus sakei subsp. sakei (strain 23K)</name>
    <name type="common">Lactobacillus sakei subsp. sakei</name>
    <dbReference type="NCBI Taxonomy" id="314315"/>
    <lineage>
        <taxon>Bacteria</taxon>
        <taxon>Bacillati</taxon>
        <taxon>Bacillota</taxon>
        <taxon>Bacilli</taxon>
        <taxon>Lactobacillales</taxon>
        <taxon>Lactobacillaceae</taxon>
        <taxon>Latilactobacillus</taxon>
    </lineage>
</organism>
<sequence>MQKNIIDELTWRDAINQQTDADGLRELTEKKSISLYCGVDPTGDSMHIGHLIPFMMMKRFQLAGHHPYIVIGGGTGSIGDPSGRKSERQLQTMEMVQHNVEALSGQMKRLFGEDANVSMVNNYDWLSKISLLDFLRDYGKLFNINTMLAKDVVASRLDVGISFTEFTYQILQSVDFMHLYKAHDVQLQIGGADQWGNITSGIDMIHKIEGSETEVYGLTIPLMLKADGTKFGKTAGGAIWLDPEKTTPYEFYQFWLNQDDRDVVKYLKYFTFLDEAEINELAKTVETAPEKREAQRRLAEEVTRFVHGQAELEGAQKITEVLFSGDIKALDVKEAEQAFQKAPTVEITAEKKNIVDFLVDAGIESSKRQAREDVQNGAITINGDRLRETTLEIDPSENFEGKFVIVRRGKKKYFLARVK</sequence>
<dbReference type="EC" id="6.1.1.1" evidence="1"/>
<dbReference type="EMBL" id="CR936503">
    <property type="protein sequence ID" value="CAI55073.1"/>
    <property type="molecule type" value="Genomic_DNA"/>
</dbReference>
<dbReference type="RefSeq" id="WP_011374476.1">
    <property type="nucleotide sequence ID" value="NC_007576.1"/>
</dbReference>
<dbReference type="SMR" id="Q38XK7"/>
<dbReference type="STRING" id="314315.LCA_0769"/>
<dbReference type="GeneID" id="57133631"/>
<dbReference type="KEGG" id="lsa:LCA_0769"/>
<dbReference type="eggNOG" id="COG0162">
    <property type="taxonomic scope" value="Bacteria"/>
</dbReference>
<dbReference type="HOGENOM" id="CLU_024003_0_3_9"/>
<dbReference type="OrthoDB" id="9804243at2"/>
<dbReference type="Proteomes" id="UP000002707">
    <property type="component" value="Chromosome"/>
</dbReference>
<dbReference type="GO" id="GO:0005829">
    <property type="term" value="C:cytosol"/>
    <property type="evidence" value="ECO:0007669"/>
    <property type="project" value="TreeGrafter"/>
</dbReference>
<dbReference type="GO" id="GO:0005524">
    <property type="term" value="F:ATP binding"/>
    <property type="evidence" value="ECO:0007669"/>
    <property type="project" value="UniProtKB-UniRule"/>
</dbReference>
<dbReference type="GO" id="GO:0003723">
    <property type="term" value="F:RNA binding"/>
    <property type="evidence" value="ECO:0007669"/>
    <property type="project" value="UniProtKB-KW"/>
</dbReference>
<dbReference type="GO" id="GO:0004831">
    <property type="term" value="F:tyrosine-tRNA ligase activity"/>
    <property type="evidence" value="ECO:0007669"/>
    <property type="project" value="UniProtKB-UniRule"/>
</dbReference>
<dbReference type="GO" id="GO:0006437">
    <property type="term" value="P:tyrosyl-tRNA aminoacylation"/>
    <property type="evidence" value="ECO:0007669"/>
    <property type="project" value="UniProtKB-UniRule"/>
</dbReference>
<dbReference type="CDD" id="cd00165">
    <property type="entry name" value="S4"/>
    <property type="match status" value="1"/>
</dbReference>
<dbReference type="CDD" id="cd00805">
    <property type="entry name" value="TyrRS_core"/>
    <property type="match status" value="1"/>
</dbReference>
<dbReference type="FunFam" id="1.10.240.10:FF:000001">
    <property type="entry name" value="Tyrosine--tRNA ligase"/>
    <property type="match status" value="1"/>
</dbReference>
<dbReference type="FunFam" id="3.40.50.620:FF:000008">
    <property type="entry name" value="Tyrosine--tRNA ligase"/>
    <property type="match status" value="1"/>
</dbReference>
<dbReference type="Gene3D" id="3.40.50.620">
    <property type="entry name" value="HUPs"/>
    <property type="match status" value="1"/>
</dbReference>
<dbReference type="Gene3D" id="3.10.290.10">
    <property type="entry name" value="RNA-binding S4 domain"/>
    <property type="match status" value="1"/>
</dbReference>
<dbReference type="Gene3D" id="1.10.240.10">
    <property type="entry name" value="Tyrosyl-Transfer RNA Synthetase"/>
    <property type="match status" value="1"/>
</dbReference>
<dbReference type="HAMAP" id="MF_02006">
    <property type="entry name" value="Tyr_tRNA_synth_type1"/>
    <property type="match status" value="1"/>
</dbReference>
<dbReference type="InterPro" id="IPR001412">
    <property type="entry name" value="aa-tRNA-synth_I_CS"/>
</dbReference>
<dbReference type="InterPro" id="IPR002305">
    <property type="entry name" value="aa-tRNA-synth_Ic"/>
</dbReference>
<dbReference type="InterPro" id="IPR014729">
    <property type="entry name" value="Rossmann-like_a/b/a_fold"/>
</dbReference>
<dbReference type="InterPro" id="IPR036986">
    <property type="entry name" value="S4_RNA-bd_sf"/>
</dbReference>
<dbReference type="InterPro" id="IPR054608">
    <property type="entry name" value="SYY-like_C"/>
</dbReference>
<dbReference type="InterPro" id="IPR002307">
    <property type="entry name" value="Tyr-tRNA-ligase"/>
</dbReference>
<dbReference type="InterPro" id="IPR024088">
    <property type="entry name" value="Tyr-tRNA-ligase_bac-type"/>
</dbReference>
<dbReference type="InterPro" id="IPR024107">
    <property type="entry name" value="Tyr-tRNA-ligase_bac_1"/>
</dbReference>
<dbReference type="NCBIfam" id="TIGR00234">
    <property type="entry name" value="tyrS"/>
    <property type="match status" value="1"/>
</dbReference>
<dbReference type="PANTHER" id="PTHR11766:SF0">
    <property type="entry name" value="TYROSINE--TRNA LIGASE, MITOCHONDRIAL"/>
    <property type="match status" value="1"/>
</dbReference>
<dbReference type="PANTHER" id="PTHR11766">
    <property type="entry name" value="TYROSYL-TRNA SYNTHETASE"/>
    <property type="match status" value="1"/>
</dbReference>
<dbReference type="Pfam" id="PF22421">
    <property type="entry name" value="SYY_C-terminal"/>
    <property type="match status" value="1"/>
</dbReference>
<dbReference type="Pfam" id="PF00579">
    <property type="entry name" value="tRNA-synt_1b"/>
    <property type="match status" value="1"/>
</dbReference>
<dbReference type="PRINTS" id="PR01040">
    <property type="entry name" value="TRNASYNTHTYR"/>
</dbReference>
<dbReference type="SUPFAM" id="SSF55174">
    <property type="entry name" value="Alpha-L RNA-binding motif"/>
    <property type="match status" value="1"/>
</dbReference>
<dbReference type="SUPFAM" id="SSF52374">
    <property type="entry name" value="Nucleotidylyl transferase"/>
    <property type="match status" value="1"/>
</dbReference>
<dbReference type="PROSITE" id="PS00178">
    <property type="entry name" value="AA_TRNA_LIGASE_I"/>
    <property type="match status" value="1"/>
</dbReference>
<dbReference type="PROSITE" id="PS50889">
    <property type="entry name" value="S4"/>
    <property type="match status" value="1"/>
</dbReference>
<name>SYY_LATSS</name>
<accession>Q38XK7</accession>
<gene>
    <name evidence="1" type="primary">tyrS</name>
    <name type="ordered locus">LCA_0769</name>
</gene>
<comment type="function">
    <text evidence="1">Catalyzes the attachment of tyrosine to tRNA(Tyr) in a two-step reaction: tyrosine is first activated by ATP to form Tyr-AMP and then transferred to the acceptor end of tRNA(Tyr).</text>
</comment>
<comment type="catalytic activity">
    <reaction evidence="1">
        <text>tRNA(Tyr) + L-tyrosine + ATP = L-tyrosyl-tRNA(Tyr) + AMP + diphosphate + H(+)</text>
        <dbReference type="Rhea" id="RHEA:10220"/>
        <dbReference type="Rhea" id="RHEA-COMP:9706"/>
        <dbReference type="Rhea" id="RHEA-COMP:9707"/>
        <dbReference type="ChEBI" id="CHEBI:15378"/>
        <dbReference type="ChEBI" id="CHEBI:30616"/>
        <dbReference type="ChEBI" id="CHEBI:33019"/>
        <dbReference type="ChEBI" id="CHEBI:58315"/>
        <dbReference type="ChEBI" id="CHEBI:78442"/>
        <dbReference type="ChEBI" id="CHEBI:78536"/>
        <dbReference type="ChEBI" id="CHEBI:456215"/>
        <dbReference type="EC" id="6.1.1.1"/>
    </reaction>
</comment>
<comment type="subunit">
    <text evidence="1">Homodimer.</text>
</comment>
<comment type="subcellular location">
    <subcellularLocation>
        <location evidence="1">Cytoplasm</location>
    </subcellularLocation>
</comment>
<comment type="similarity">
    <text evidence="1">Belongs to the class-I aminoacyl-tRNA synthetase family. TyrS type 1 subfamily.</text>
</comment>